<proteinExistence type="evidence at transcript level"/>
<feature type="chain" id="PRO_0000373112" description="Putative ATP-dependent RNA helicase QP509L">
    <location>
        <begin position="1"/>
        <end position="509"/>
    </location>
</feature>
<feature type="domain" description="Helicase ATP-binding" evidence="1">
    <location>
        <begin position="110"/>
        <end position="262"/>
    </location>
</feature>
<feature type="short sequence motif" description="DEAH box">
    <location>
        <begin position="215"/>
        <end position="218"/>
    </location>
</feature>
<feature type="binding site" evidence="1">
    <location>
        <begin position="123"/>
        <end position="130"/>
    </location>
    <ligand>
        <name>ATP</name>
        <dbReference type="ChEBI" id="CHEBI:30616"/>
    </ligand>
</feature>
<keyword id="KW-0067">ATP-binding</keyword>
<keyword id="KW-0347">Helicase</keyword>
<keyword id="KW-0378">Hydrolase</keyword>
<keyword id="KW-0426">Late protein</keyword>
<keyword id="KW-0547">Nucleotide-binding</keyword>
<keyword id="KW-1185">Reference proteome</keyword>
<dbReference type="EC" id="3.6.4.13"/>
<dbReference type="EMBL" id="U18466">
    <property type="protein sequence ID" value="AAA65351.1"/>
    <property type="molecule type" value="Genomic_DNA"/>
</dbReference>
<dbReference type="RefSeq" id="NP_042815.1">
    <property type="nucleotide sequence ID" value="NC_001659.2"/>
</dbReference>
<dbReference type="GeneID" id="22220352"/>
<dbReference type="KEGG" id="vg:22220352"/>
<dbReference type="Proteomes" id="UP000000624">
    <property type="component" value="Segment"/>
</dbReference>
<dbReference type="GO" id="GO:0005524">
    <property type="term" value="F:ATP binding"/>
    <property type="evidence" value="ECO:0007669"/>
    <property type="project" value="UniProtKB-KW"/>
</dbReference>
<dbReference type="GO" id="GO:0016887">
    <property type="term" value="F:ATP hydrolysis activity"/>
    <property type="evidence" value="ECO:0007669"/>
    <property type="project" value="RHEA"/>
</dbReference>
<dbReference type="GO" id="GO:0003677">
    <property type="term" value="F:DNA binding"/>
    <property type="evidence" value="ECO:0007669"/>
    <property type="project" value="InterPro"/>
</dbReference>
<dbReference type="GO" id="GO:0003724">
    <property type="term" value="F:RNA helicase activity"/>
    <property type="evidence" value="ECO:0007669"/>
    <property type="project" value="UniProtKB-EC"/>
</dbReference>
<dbReference type="Gene3D" id="3.40.50.300">
    <property type="entry name" value="P-loop containing nucleotide triphosphate hydrolases"/>
    <property type="match status" value="2"/>
</dbReference>
<dbReference type="InterPro" id="IPR006935">
    <property type="entry name" value="Helicase/UvrB_N"/>
</dbReference>
<dbReference type="InterPro" id="IPR014001">
    <property type="entry name" value="Helicase_ATP-bd"/>
</dbReference>
<dbReference type="InterPro" id="IPR050742">
    <property type="entry name" value="Helicase_Restrict-Modif_Enz"/>
</dbReference>
<dbReference type="InterPro" id="IPR027417">
    <property type="entry name" value="P-loop_NTPase"/>
</dbReference>
<dbReference type="PANTHER" id="PTHR47396:SF1">
    <property type="entry name" value="ATP-DEPENDENT HELICASE IRC3-RELATED"/>
    <property type="match status" value="1"/>
</dbReference>
<dbReference type="PANTHER" id="PTHR47396">
    <property type="entry name" value="TYPE I RESTRICTION ENZYME ECOKI R PROTEIN"/>
    <property type="match status" value="1"/>
</dbReference>
<dbReference type="Pfam" id="PF04851">
    <property type="entry name" value="ResIII"/>
    <property type="match status" value="1"/>
</dbReference>
<dbReference type="SMART" id="SM00487">
    <property type="entry name" value="DEXDc"/>
    <property type="match status" value="1"/>
</dbReference>
<dbReference type="SUPFAM" id="SSF52540">
    <property type="entry name" value="P-loop containing nucleoside triphosphate hydrolases"/>
    <property type="match status" value="2"/>
</dbReference>
<dbReference type="PROSITE" id="PS00690">
    <property type="entry name" value="DEAH_ATP_HELICASE"/>
    <property type="match status" value="1"/>
</dbReference>
<dbReference type="PROSITE" id="PS51192">
    <property type="entry name" value="HELICASE_ATP_BIND_1"/>
    <property type="match status" value="1"/>
</dbReference>
<gene>
    <name type="ordered locus">Ba71V-123</name>
    <name type="ORF">QP509L</name>
</gene>
<organism>
    <name type="scientific">African swine fever virus (strain Badajoz 1971 Vero-adapted)</name>
    <name type="common">Ba71V</name>
    <name type="synonym">ASFV</name>
    <dbReference type="NCBI Taxonomy" id="10498"/>
    <lineage>
        <taxon>Viruses</taxon>
        <taxon>Varidnaviria</taxon>
        <taxon>Bamfordvirae</taxon>
        <taxon>Nucleocytoviricota</taxon>
        <taxon>Pokkesviricetes</taxon>
        <taxon>Asfuvirales</taxon>
        <taxon>Asfarviridae</taxon>
        <taxon>Asfivirus</taxon>
        <taxon>African swine fever virus</taxon>
    </lineage>
</organism>
<name>VF509_ASFB7</name>
<sequence>MEAIISFAGIGINYKKLQSKLQHDFGRLLKALTVTARALPGQPKHIAIRQETAFTLQGEYIYFPILLRKQFEMFNMVYTTRPVSLRALPCVETEFPLFNYQQEMVDKIHKKLLSPYGRFYLHLNTGLGKTRIAISIIQKLLYPTLVIVPTKAIQIQWIDELTLLLPHLRVAAYNNAACKKKDMTSKEYDVIVGIINTLRKKPEQFFEPFGLVVLDEAHELHSPENYKIFWKIQLSRILGLSATPLDRPDGMDKIIIHHLGQPQRTVSPTTTFSGYVREIEYQGHPDFVSPVCINEKVSAIATIDKLLQDPSRIQLVVNEAKRLYSLHTAEPHKWGTDEPYGIIIFVEFRKLLEIFYQALSKEFKDVQIVVPEVALLCGGVSNTALSQAHSASIILLTYGYGRRGISFKHMTSIIMATPRRNNMEQILGRITRQGSDEKKVRIVVDIKDTLSPLSSQVYDRHRIYKKKGYPIFKCSASYQQPYSSNEVLIWDPYNESCLACTTTPPSPSK</sequence>
<comment type="catalytic activity">
    <reaction>
        <text>ATP + H2O = ADP + phosphate + H(+)</text>
        <dbReference type="Rhea" id="RHEA:13065"/>
        <dbReference type="ChEBI" id="CHEBI:15377"/>
        <dbReference type="ChEBI" id="CHEBI:15378"/>
        <dbReference type="ChEBI" id="CHEBI:30616"/>
        <dbReference type="ChEBI" id="CHEBI:43474"/>
        <dbReference type="ChEBI" id="CHEBI:456216"/>
        <dbReference type="EC" id="3.6.4.13"/>
    </reaction>
</comment>
<comment type="induction">
    <text evidence="2">Expressed in the late phase of the viral replicative cycle.</text>
</comment>
<comment type="similarity">
    <text evidence="3">Belongs to the DEAD box helicase family. DEAH subfamily.</text>
</comment>
<reference key="1">
    <citation type="journal article" date="1995" name="Virology">
        <title>Analysis of the complete nucleotide sequence of African swine fever virus.</title>
        <authorList>
            <person name="Yanez R.J."/>
            <person name="Rodriguez J.M."/>
            <person name="Nogal M.L."/>
            <person name="Yuste L."/>
            <person name="Enriquez C."/>
            <person name="Rodriguez J.F."/>
            <person name="Vinuela E."/>
        </authorList>
    </citation>
    <scope>NUCLEOTIDE SEQUENCE [LARGE SCALE GENOMIC DNA]</scope>
</reference>
<reference key="2">
    <citation type="journal article" date="2020" name="J. Virol.">
        <title>The African Swine Fever Virus Transcriptome.</title>
        <authorList>
            <person name="Cackett G."/>
            <person name="Matelska D."/>
            <person name="Sykora M."/>
            <person name="Portugal R."/>
            <person name="Malecki M."/>
            <person name="Baehler J."/>
            <person name="Dixon L."/>
            <person name="Werner F."/>
        </authorList>
    </citation>
    <scope>INDUCTION</scope>
</reference>
<protein>
    <recommendedName>
        <fullName>Putative ATP-dependent RNA helicase QP509L</fullName>
        <ecNumber>3.6.4.13</ecNumber>
    </recommendedName>
</protein>
<accession>Q65191</accession>
<organismHost>
    <name type="scientific">Ornithodoros</name>
    <name type="common">relapsing fever ticks</name>
    <dbReference type="NCBI Taxonomy" id="6937"/>
</organismHost>
<organismHost>
    <name type="scientific">Sus scrofa</name>
    <name type="common">Pig</name>
    <dbReference type="NCBI Taxonomy" id="9823"/>
</organismHost>
<evidence type="ECO:0000255" key="1">
    <source>
        <dbReference type="PROSITE-ProRule" id="PRU00541"/>
    </source>
</evidence>
<evidence type="ECO:0000269" key="2">
    <source>
    </source>
</evidence>
<evidence type="ECO:0000305" key="3"/>